<protein>
    <recommendedName>
        <fullName>Protein TIC 22-like, chloroplastic</fullName>
    </recommendedName>
    <alternativeName>
        <fullName>Translocon at the inner envelope membrane of chloroplasts 22-III</fullName>
        <shortName>AtTIC22-III</shortName>
    </alternativeName>
</protein>
<name>TI22L_ARATH</name>
<evidence type="ECO:0000250" key="1"/>
<evidence type="ECO:0000255" key="2"/>
<evidence type="ECO:0000305" key="3"/>
<accession>F4J469</accession>
<accession>Q9LK46</accession>
<reference key="1">
    <citation type="journal article" date="2000" name="DNA Res.">
        <title>Structural analysis of Arabidopsis thaliana chromosome 3. II. Sequence features of the 4,251,695 bp regions covered by 90 P1, TAC and BAC clones.</title>
        <authorList>
            <person name="Kaneko T."/>
            <person name="Katoh T."/>
            <person name="Sato S."/>
            <person name="Nakamura Y."/>
            <person name="Asamizu E."/>
            <person name="Tabata S."/>
        </authorList>
    </citation>
    <scope>NUCLEOTIDE SEQUENCE [LARGE SCALE GENOMIC DNA]</scope>
    <source>
        <strain>cv. Columbia</strain>
    </source>
</reference>
<reference key="2">
    <citation type="journal article" date="2017" name="Plant J.">
        <title>Araport11: a complete reannotation of the Arabidopsis thaliana reference genome.</title>
        <authorList>
            <person name="Cheng C.Y."/>
            <person name="Krishnakumar V."/>
            <person name="Chan A.P."/>
            <person name="Thibaud-Nissen F."/>
            <person name="Schobel S."/>
            <person name="Town C.D."/>
        </authorList>
    </citation>
    <scope>GENOME REANNOTATION</scope>
    <source>
        <strain>cv. Columbia</strain>
    </source>
</reference>
<reference key="3">
    <citation type="journal article" date="2008" name="New Phytol.">
        <title>Targeting of nucleus-encoded proteins to chloroplasts in plants.</title>
        <authorList>
            <person name="Jarvis P."/>
        </authorList>
    </citation>
    <scope>IDENTIFICATION</scope>
</reference>
<reference key="4">
    <citation type="journal article" date="2010" name="Biochim. Biophys. Acta">
        <title>Protein import into chloroplasts: the Tic complex and its regulation.</title>
        <authorList>
            <person name="Kovacs-Bogdan E."/>
            <person name="Soll J."/>
            <person name="Bolter B."/>
        </authorList>
    </citation>
    <scope>REVIEW</scope>
</reference>
<comment type="function">
    <text evidence="1">Involved in protein precursor import into chloroplasts.</text>
</comment>
<comment type="subcellular location">
    <subcellularLocation>
        <location evidence="1">Plastid</location>
        <location evidence="1">Chloroplast intermembrane space</location>
        <topology evidence="1">Peripheral membrane protein</topology>
    </subcellularLocation>
</comment>
<comment type="similarity">
    <text evidence="3">Belongs to the Tic22 family.</text>
</comment>
<comment type="sequence caution" evidence="3">
    <conflict type="erroneous gene model prediction">
        <sequence resource="EMBL-CDS" id="BAB01848"/>
    </conflict>
</comment>
<keyword id="KW-0150">Chloroplast</keyword>
<keyword id="KW-0472">Membrane</keyword>
<keyword id="KW-0934">Plastid</keyword>
<keyword id="KW-0653">Protein transport</keyword>
<keyword id="KW-1185">Reference proteome</keyword>
<keyword id="KW-0809">Transit peptide</keyword>
<keyword id="KW-0813">Transport</keyword>
<proteinExistence type="inferred from homology"/>
<dbReference type="EMBL" id="AP000377">
    <property type="protein sequence ID" value="BAB01848.1"/>
    <property type="status" value="ALT_SEQ"/>
    <property type="molecule type" value="Genomic_DNA"/>
</dbReference>
<dbReference type="EMBL" id="CP002686">
    <property type="protein sequence ID" value="AEE76804.1"/>
    <property type="molecule type" value="Genomic_DNA"/>
</dbReference>
<dbReference type="RefSeq" id="NP_189013.1">
    <property type="nucleotide sequence ID" value="NM_113275.3"/>
</dbReference>
<dbReference type="SMR" id="F4J469"/>
<dbReference type="BioGRID" id="7284">
    <property type="interactions" value="2"/>
</dbReference>
<dbReference type="FunCoup" id="F4J469">
    <property type="interactions" value="460"/>
</dbReference>
<dbReference type="IntAct" id="F4J469">
    <property type="interactions" value="1"/>
</dbReference>
<dbReference type="STRING" id="3702.F4J469"/>
<dbReference type="PaxDb" id="3702-AT3G23710.1"/>
<dbReference type="ProteomicsDB" id="234424"/>
<dbReference type="EnsemblPlants" id="AT3G23710.1">
    <property type="protein sequence ID" value="AT3G23710.1"/>
    <property type="gene ID" value="AT3G23710"/>
</dbReference>
<dbReference type="GeneID" id="821952"/>
<dbReference type="Gramene" id="AT3G23710.1">
    <property type="protein sequence ID" value="AT3G23710.1"/>
    <property type="gene ID" value="AT3G23710"/>
</dbReference>
<dbReference type="KEGG" id="ath:AT3G23710"/>
<dbReference type="Araport" id="AT3G23710"/>
<dbReference type="TAIR" id="AT3G23710">
    <property type="gene designation" value="TIC22-III"/>
</dbReference>
<dbReference type="eggNOG" id="ENOG502QV72">
    <property type="taxonomic scope" value="Eukaryota"/>
</dbReference>
<dbReference type="HOGENOM" id="CLU_078907_0_0_1"/>
<dbReference type="InParanoid" id="F4J469"/>
<dbReference type="OMA" id="MGDIQVS"/>
<dbReference type="OrthoDB" id="196308at2759"/>
<dbReference type="PRO" id="PR:F4J469"/>
<dbReference type="Proteomes" id="UP000006548">
    <property type="component" value="Chromosome 3"/>
</dbReference>
<dbReference type="ExpressionAtlas" id="F4J469">
    <property type="expression patterns" value="baseline and differential"/>
</dbReference>
<dbReference type="GO" id="GO:0031972">
    <property type="term" value="C:chloroplast intermembrane space"/>
    <property type="evidence" value="ECO:0007669"/>
    <property type="project" value="UniProtKB-SubCell"/>
</dbReference>
<dbReference type="GO" id="GO:0005829">
    <property type="term" value="C:cytosol"/>
    <property type="evidence" value="ECO:0007005"/>
    <property type="project" value="TAIR"/>
</dbReference>
<dbReference type="GO" id="GO:0016020">
    <property type="term" value="C:membrane"/>
    <property type="evidence" value="ECO:0007669"/>
    <property type="project" value="UniProtKB-KW"/>
</dbReference>
<dbReference type="GO" id="GO:0009536">
    <property type="term" value="C:plastid"/>
    <property type="evidence" value="ECO:0007005"/>
    <property type="project" value="TAIR"/>
</dbReference>
<dbReference type="GO" id="GO:0015031">
    <property type="term" value="P:protein transport"/>
    <property type="evidence" value="ECO:0007669"/>
    <property type="project" value="UniProtKB-KW"/>
</dbReference>
<dbReference type="FunFam" id="3.40.1350.100:FF:000002">
    <property type="entry name" value="Protein TIC 22-like, chloroplastic"/>
    <property type="match status" value="1"/>
</dbReference>
<dbReference type="FunFam" id="3.40.1350.100:FF:000003">
    <property type="entry name" value="Protein TIC 22-like, chloroplastic"/>
    <property type="match status" value="1"/>
</dbReference>
<dbReference type="Gene3D" id="3.40.1350.100">
    <property type="match status" value="2"/>
</dbReference>
<dbReference type="InterPro" id="IPR007378">
    <property type="entry name" value="Tic22-like"/>
</dbReference>
<dbReference type="PANTHER" id="PTHR33926">
    <property type="entry name" value="PROTEIN TIC 22, CHLOROPLASTIC"/>
    <property type="match status" value="1"/>
</dbReference>
<dbReference type="PANTHER" id="PTHR33926:SF1">
    <property type="entry name" value="PROTEIN TIC 22-LIKE, CHLOROPLASTIC"/>
    <property type="match status" value="1"/>
</dbReference>
<dbReference type="Pfam" id="PF04278">
    <property type="entry name" value="Tic22"/>
    <property type="match status" value="1"/>
</dbReference>
<sequence length="313" mass="34575">MNSNIFPPSKQQNELNNIQQSFSNLQSQCSNLLLNVSQTLNPLFNANTNNNKPNIFSALNSFRDQAKQALDSRISRFNSGKAPVWARISDDGGGARAQVTVPIRGSGKGLSADAIEERLAGVPVYALSNSNEEFVLVSGTSSGKSLGLLFCKEEDAETLLKEMKSMDPRMRKEGSKVVALALSKVFQLKVNGVAFRLIPESTQVKNALKERKTAGIDDDDFHGVPVFQSKSLILRSENMSYRPVFFRKEDLEKSLIRASSQQNRLNPALKPGDIQVAVFEDIVKGMRESTTSNWDDIVFIPPGFEVSTEQTQE</sequence>
<gene>
    <name type="primary">TIC22L</name>
    <name type="synonym">TIC22-III</name>
    <name type="ordered locus">At3g23710</name>
    <name type="ORF">MYM9.5</name>
</gene>
<feature type="transit peptide" description="Chloroplast" evidence="2">
    <location>
        <begin position="1"/>
        <end position="96"/>
    </location>
</feature>
<feature type="chain" id="PRO_0000413671" description="Protein TIC 22-like, chloroplastic">
    <location>
        <begin position="97"/>
        <end position="313"/>
    </location>
</feature>
<organism>
    <name type="scientific">Arabidopsis thaliana</name>
    <name type="common">Mouse-ear cress</name>
    <dbReference type="NCBI Taxonomy" id="3702"/>
    <lineage>
        <taxon>Eukaryota</taxon>
        <taxon>Viridiplantae</taxon>
        <taxon>Streptophyta</taxon>
        <taxon>Embryophyta</taxon>
        <taxon>Tracheophyta</taxon>
        <taxon>Spermatophyta</taxon>
        <taxon>Magnoliopsida</taxon>
        <taxon>eudicotyledons</taxon>
        <taxon>Gunneridae</taxon>
        <taxon>Pentapetalae</taxon>
        <taxon>rosids</taxon>
        <taxon>malvids</taxon>
        <taxon>Brassicales</taxon>
        <taxon>Brassicaceae</taxon>
        <taxon>Camelineae</taxon>
        <taxon>Arabidopsis</taxon>
    </lineage>
</organism>